<dbReference type="EMBL" id="AL050300">
    <property type="protein sequence ID" value="CAB43436.1"/>
    <property type="molecule type" value="Genomic_DNA"/>
</dbReference>
<dbReference type="EMBL" id="CP002686">
    <property type="protein sequence ID" value="AEE78946.1"/>
    <property type="molecule type" value="Genomic_DNA"/>
</dbReference>
<dbReference type="PIR" id="T08455">
    <property type="entry name" value="T08455"/>
</dbReference>
<dbReference type="RefSeq" id="NP_190812.1">
    <property type="nucleotide sequence ID" value="NM_115104.2"/>
</dbReference>
<dbReference type="BioGRID" id="9727">
    <property type="interactions" value="2"/>
</dbReference>
<dbReference type="FunCoup" id="Q9SVC5">
    <property type="interactions" value="25"/>
</dbReference>
<dbReference type="STRING" id="3702.Q9SVC5"/>
<dbReference type="PaxDb" id="3702-AT3G52440.1"/>
<dbReference type="ProteomicsDB" id="222114"/>
<dbReference type="EnsemblPlants" id="AT3G52440.1">
    <property type="protein sequence ID" value="AT3G52440.1"/>
    <property type="gene ID" value="AT3G52440"/>
</dbReference>
<dbReference type="GeneID" id="824409"/>
<dbReference type="Gramene" id="AT3G52440.1">
    <property type="protein sequence ID" value="AT3G52440.1"/>
    <property type="gene ID" value="AT3G52440"/>
</dbReference>
<dbReference type="KEGG" id="ath:AT3G52440"/>
<dbReference type="Araport" id="AT3G52440"/>
<dbReference type="TAIR" id="AT3G52440"/>
<dbReference type="eggNOG" id="ENOG502S2EC">
    <property type="taxonomic scope" value="Eukaryota"/>
</dbReference>
<dbReference type="HOGENOM" id="CLU_036438_3_0_1"/>
<dbReference type="InParanoid" id="Q9SVC5"/>
<dbReference type="OMA" id="ALMETSW"/>
<dbReference type="PhylomeDB" id="Q9SVC5"/>
<dbReference type="PRO" id="PR:Q9SVC5"/>
<dbReference type="Proteomes" id="UP000006548">
    <property type="component" value="Chromosome 3"/>
</dbReference>
<dbReference type="ExpressionAtlas" id="Q9SVC5">
    <property type="expression patterns" value="baseline and differential"/>
</dbReference>
<dbReference type="GO" id="GO:0005634">
    <property type="term" value="C:nucleus"/>
    <property type="evidence" value="ECO:0007669"/>
    <property type="project" value="UniProtKB-SubCell"/>
</dbReference>
<dbReference type="GO" id="GO:0003677">
    <property type="term" value="F:DNA binding"/>
    <property type="evidence" value="ECO:0007669"/>
    <property type="project" value="UniProtKB-KW"/>
</dbReference>
<dbReference type="GO" id="GO:0003700">
    <property type="term" value="F:DNA-binding transcription factor activity"/>
    <property type="evidence" value="ECO:0000250"/>
    <property type="project" value="TAIR"/>
</dbReference>
<dbReference type="GO" id="GO:0008270">
    <property type="term" value="F:zinc ion binding"/>
    <property type="evidence" value="ECO:0007669"/>
    <property type="project" value="UniProtKB-KW"/>
</dbReference>
<dbReference type="GO" id="GO:0006355">
    <property type="term" value="P:regulation of DNA-templated transcription"/>
    <property type="evidence" value="ECO:0000304"/>
    <property type="project" value="TAIR"/>
</dbReference>
<dbReference type="InterPro" id="IPR045174">
    <property type="entry name" value="Dof"/>
</dbReference>
<dbReference type="InterPro" id="IPR003851">
    <property type="entry name" value="Znf_Dof"/>
</dbReference>
<dbReference type="PANTHER" id="PTHR31992">
    <property type="entry name" value="DOF ZINC FINGER PROTEIN DOF1.4-RELATED"/>
    <property type="match status" value="1"/>
</dbReference>
<dbReference type="PANTHER" id="PTHR31992:SF111">
    <property type="entry name" value="DOF ZINC FINGER PROTEIN DOF3.5"/>
    <property type="match status" value="1"/>
</dbReference>
<dbReference type="Pfam" id="PF02701">
    <property type="entry name" value="Zn_ribbon_Dof"/>
    <property type="match status" value="1"/>
</dbReference>
<dbReference type="PROSITE" id="PS01361">
    <property type="entry name" value="ZF_DOF_1"/>
    <property type="match status" value="1"/>
</dbReference>
<dbReference type="PROSITE" id="PS50884">
    <property type="entry name" value="ZF_DOF_2"/>
    <property type="match status" value="1"/>
</dbReference>
<proteinExistence type="inferred from homology"/>
<name>DOF35_ARATH</name>
<reference key="1">
    <citation type="journal article" date="2000" name="Nature">
        <title>Sequence and analysis of chromosome 3 of the plant Arabidopsis thaliana.</title>
        <authorList>
            <person name="Salanoubat M."/>
            <person name="Lemcke K."/>
            <person name="Rieger M."/>
            <person name="Ansorge W."/>
            <person name="Unseld M."/>
            <person name="Fartmann B."/>
            <person name="Valle G."/>
            <person name="Bloecker H."/>
            <person name="Perez-Alonso M."/>
            <person name="Obermaier B."/>
            <person name="Delseny M."/>
            <person name="Boutry M."/>
            <person name="Grivell L.A."/>
            <person name="Mache R."/>
            <person name="Puigdomenech P."/>
            <person name="De Simone V."/>
            <person name="Choisne N."/>
            <person name="Artiguenave F."/>
            <person name="Robert C."/>
            <person name="Brottier P."/>
            <person name="Wincker P."/>
            <person name="Cattolico L."/>
            <person name="Weissenbach J."/>
            <person name="Saurin W."/>
            <person name="Quetier F."/>
            <person name="Schaefer M."/>
            <person name="Mueller-Auer S."/>
            <person name="Gabel C."/>
            <person name="Fuchs M."/>
            <person name="Benes V."/>
            <person name="Wurmbach E."/>
            <person name="Drzonek H."/>
            <person name="Erfle H."/>
            <person name="Jordan N."/>
            <person name="Bangert S."/>
            <person name="Wiedelmann R."/>
            <person name="Kranz H."/>
            <person name="Voss H."/>
            <person name="Holland R."/>
            <person name="Brandt P."/>
            <person name="Nyakatura G."/>
            <person name="Vezzi A."/>
            <person name="D'Angelo M."/>
            <person name="Pallavicini A."/>
            <person name="Toppo S."/>
            <person name="Simionati B."/>
            <person name="Conrad A."/>
            <person name="Hornischer K."/>
            <person name="Kauer G."/>
            <person name="Loehnert T.-H."/>
            <person name="Nordsiek G."/>
            <person name="Reichelt J."/>
            <person name="Scharfe M."/>
            <person name="Schoen O."/>
            <person name="Bargues M."/>
            <person name="Terol J."/>
            <person name="Climent J."/>
            <person name="Navarro P."/>
            <person name="Collado C."/>
            <person name="Perez-Perez A."/>
            <person name="Ottenwaelder B."/>
            <person name="Duchemin D."/>
            <person name="Cooke R."/>
            <person name="Laudie M."/>
            <person name="Berger-Llauro C."/>
            <person name="Purnelle B."/>
            <person name="Masuy D."/>
            <person name="de Haan M."/>
            <person name="Maarse A.C."/>
            <person name="Alcaraz J.-P."/>
            <person name="Cottet A."/>
            <person name="Casacuberta E."/>
            <person name="Monfort A."/>
            <person name="Argiriou A."/>
            <person name="Flores M."/>
            <person name="Liguori R."/>
            <person name="Vitale D."/>
            <person name="Mannhaupt G."/>
            <person name="Haase D."/>
            <person name="Schoof H."/>
            <person name="Rudd S."/>
            <person name="Zaccaria P."/>
            <person name="Mewes H.-W."/>
            <person name="Mayer K.F.X."/>
            <person name="Kaul S."/>
            <person name="Town C.D."/>
            <person name="Koo H.L."/>
            <person name="Tallon L.J."/>
            <person name="Jenkins J."/>
            <person name="Rooney T."/>
            <person name="Rizzo M."/>
            <person name="Walts A."/>
            <person name="Utterback T."/>
            <person name="Fujii C.Y."/>
            <person name="Shea T.P."/>
            <person name="Creasy T.H."/>
            <person name="Haas B."/>
            <person name="Maiti R."/>
            <person name="Wu D."/>
            <person name="Peterson J."/>
            <person name="Van Aken S."/>
            <person name="Pai G."/>
            <person name="Militscher J."/>
            <person name="Sellers P."/>
            <person name="Gill J.E."/>
            <person name="Feldblyum T.V."/>
            <person name="Preuss D."/>
            <person name="Lin X."/>
            <person name="Nierman W.C."/>
            <person name="Salzberg S.L."/>
            <person name="White O."/>
            <person name="Venter J.C."/>
            <person name="Fraser C.M."/>
            <person name="Kaneko T."/>
            <person name="Nakamura Y."/>
            <person name="Sato S."/>
            <person name="Kato T."/>
            <person name="Asamizu E."/>
            <person name="Sasamoto S."/>
            <person name="Kimura T."/>
            <person name="Idesawa K."/>
            <person name="Kawashima K."/>
            <person name="Kishida Y."/>
            <person name="Kiyokawa C."/>
            <person name="Kohara M."/>
            <person name="Matsumoto M."/>
            <person name="Matsuno A."/>
            <person name="Muraki A."/>
            <person name="Nakayama S."/>
            <person name="Nakazaki N."/>
            <person name="Shinpo S."/>
            <person name="Takeuchi C."/>
            <person name="Wada T."/>
            <person name="Watanabe A."/>
            <person name="Yamada M."/>
            <person name="Yasuda M."/>
            <person name="Tabata S."/>
        </authorList>
    </citation>
    <scope>NUCLEOTIDE SEQUENCE [LARGE SCALE GENOMIC DNA]</scope>
    <source>
        <strain>cv. Columbia</strain>
    </source>
</reference>
<reference key="2">
    <citation type="journal article" date="2017" name="Plant J.">
        <title>Araport11: a complete reannotation of the Arabidopsis thaliana reference genome.</title>
        <authorList>
            <person name="Cheng C.Y."/>
            <person name="Krishnakumar V."/>
            <person name="Chan A.P."/>
            <person name="Thibaud-Nissen F."/>
            <person name="Schobel S."/>
            <person name="Town C.D."/>
        </authorList>
    </citation>
    <scope>GENOME REANNOTATION</scope>
    <source>
        <strain>cv. Columbia</strain>
    </source>
</reference>
<reference key="3">
    <citation type="journal article" date="2002" name="Trends Plant Sci.">
        <title>The Dof family of plant transcription factors.</title>
        <authorList>
            <person name="Yanagisawa S."/>
        </authorList>
    </citation>
    <scope>GENE FAMILY</scope>
    <scope>NOMENCLATURE</scope>
</reference>
<sequence>MERAEALTSSFIWRPNANANAEITPSCPRCGSSNTKFCYYNNYSLTQPRYFCKGCRRYWTKGGSLRNVPVGGGCRKSRRPKSSSGNNTKTSLTANSGNPGGGSPSIDLALVYANFLNPKPDESILQENCDLATTDFLVDNPTGTSMDPSWSMDINDGHHDHYINPVEHIVEECGYNGLPPFPGEELLSLDTNGVWSDALLIGHNHVDVGVTPVQAVHEPVVHFADESNDSTNLLFGSWSPFDFTADG</sequence>
<comment type="function">
    <text evidence="1">Transcription factor that binds specifically to a 5'-AA[AG]G-3' consensus core sequence.</text>
</comment>
<comment type="subcellular location">
    <subcellularLocation>
        <location evidence="4">Nucleus</location>
    </subcellularLocation>
</comment>
<evidence type="ECO:0000250" key="1"/>
<evidence type="ECO:0000255" key="2">
    <source>
        <dbReference type="PROSITE-ProRule" id="PRU00071"/>
    </source>
</evidence>
<evidence type="ECO:0000256" key="3">
    <source>
        <dbReference type="SAM" id="MobiDB-lite"/>
    </source>
</evidence>
<evidence type="ECO:0000305" key="4"/>
<keyword id="KW-0238">DNA-binding</keyword>
<keyword id="KW-0479">Metal-binding</keyword>
<keyword id="KW-0539">Nucleus</keyword>
<keyword id="KW-1185">Reference proteome</keyword>
<keyword id="KW-0804">Transcription</keyword>
<keyword id="KW-0805">Transcription regulation</keyword>
<keyword id="KW-0862">Zinc</keyword>
<keyword id="KW-0863">Zinc-finger</keyword>
<feature type="chain" id="PRO_0000074281" description="Dof zinc finger protein DOF3.5">
    <location>
        <begin position="1"/>
        <end position="247"/>
    </location>
</feature>
<feature type="zinc finger region" description="Dof-type" evidence="2">
    <location>
        <begin position="25"/>
        <end position="79"/>
    </location>
</feature>
<feature type="region of interest" description="Disordered" evidence="3">
    <location>
        <begin position="70"/>
        <end position="100"/>
    </location>
</feature>
<feature type="compositionally biased region" description="Polar residues" evidence="3">
    <location>
        <begin position="82"/>
        <end position="94"/>
    </location>
</feature>
<feature type="binding site" evidence="2">
    <location>
        <position position="27"/>
    </location>
    <ligand>
        <name>Zn(2+)</name>
        <dbReference type="ChEBI" id="CHEBI:29105"/>
    </ligand>
</feature>
<feature type="binding site" evidence="2">
    <location>
        <position position="30"/>
    </location>
    <ligand>
        <name>Zn(2+)</name>
        <dbReference type="ChEBI" id="CHEBI:29105"/>
    </ligand>
</feature>
<feature type="binding site" evidence="2">
    <location>
        <position position="52"/>
    </location>
    <ligand>
        <name>Zn(2+)</name>
        <dbReference type="ChEBI" id="CHEBI:29105"/>
    </ligand>
</feature>
<feature type="binding site" evidence="2">
    <location>
        <position position="55"/>
    </location>
    <ligand>
        <name>Zn(2+)</name>
        <dbReference type="ChEBI" id="CHEBI:29105"/>
    </ligand>
</feature>
<organism>
    <name type="scientific">Arabidopsis thaliana</name>
    <name type="common">Mouse-ear cress</name>
    <dbReference type="NCBI Taxonomy" id="3702"/>
    <lineage>
        <taxon>Eukaryota</taxon>
        <taxon>Viridiplantae</taxon>
        <taxon>Streptophyta</taxon>
        <taxon>Embryophyta</taxon>
        <taxon>Tracheophyta</taxon>
        <taxon>Spermatophyta</taxon>
        <taxon>Magnoliopsida</taxon>
        <taxon>eudicotyledons</taxon>
        <taxon>Gunneridae</taxon>
        <taxon>Pentapetalae</taxon>
        <taxon>rosids</taxon>
        <taxon>malvids</taxon>
        <taxon>Brassicales</taxon>
        <taxon>Brassicaceae</taxon>
        <taxon>Camelineae</taxon>
        <taxon>Arabidopsis</taxon>
    </lineage>
</organism>
<gene>
    <name type="primary">DOF3.5</name>
    <name type="ordered locus">At3g52440</name>
    <name type="ORF">F22O6_180</name>
</gene>
<accession>Q9SVC5</accession>
<protein>
    <recommendedName>
        <fullName>Dof zinc finger protein DOF3.5</fullName>
        <shortName>AtDOF3.5</shortName>
    </recommendedName>
</protein>